<dbReference type="EMBL" id="X55454">
    <property type="protein sequence ID" value="CAA39099.1"/>
    <property type="molecule type" value="mRNA"/>
</dbReference>
<dbReference type="PIR" id="B25310">
    <property type="entry name" value="B25310"/>
</dbReference>
<dbReference type="RefSeq" id="XP_044435885.1">
    <property type="nucleotide sequence ID" value="XM_044579950.1"/>
</dbReference>
<dbReference type="SMR" id="P16851"/>
<dbReference type="STRING" id="4565.P16851"/>
<dbReference type="Allergome" id="8188">
    <property type="allergen name" value="Tri a 29"/>
</dbReference>
<dbReference type="MEROPS" id="I06.004"/>
<dbReference type="EnsemblPlants" id="TraesARI5B03G02944030.1">
    <property type="protein sequence ID" value="TraesARI5B03G02944030.1.CDS1"/>
    <property type="gene ID" value="TraesARI5B03G02944030"/>
</dbReference>
<dbReference type="EnsemblPlants" id="TraesCAD_scaffold_028654_01G000200.1">
    <property type="protein sequence ID" value="TraesCAD_scaffold_028654_01G000200.1"/>
    <property type="gene ID" value="TraesCAD_scaffold_028654_01G000200"/>
</dbReference>
<dbReference type="EnsemblPlants" id="TraesCLE_scaffold_075039_01G000200.1">
    <property type="protein sequence ID" value="TraesCLE_scaffold_075039_01G000200.1"/>
    <property type="gene ID" value="TraesCLE_scaffold_075039_01G000200"/>
</dbReference>
<dbReference type="EnsemblPlants" id="TraesCS7B02G072000.1">
    <property type="protein sequence ID" value="TraesCS7B02G072000.1.cds1"/>
    <property type="gene ID" value="TraesCS7B02G072000"/>
</dbReference>
<dbReference type="EnsemblPlants" id="TraesCS7B03G0195800.1">
    <property type="protein sequence ID" value="TraesCS7B03G0195800.1.CDS1"/>
    <property type="gene ID" value="TraesCS7B03G0195800"/>
</dbReference>
<dbReference type="EnsemblPlants" id="TraesJAG7B03G04054560.1">
    <property type="protein sequence ID" value="TraesJAG7B03G04054560.1.CDS1"/>
    <property type="gene ID" value="TraesJAG7B03G04054560"/>
</dbReference>
<dbReference type="EnsemblPlants" id="TraesJUL7B03G04109780.1">
    <property type="protein sequence ID" value="TraesJUL7B03G04109780.1.CDS1"/>
    <property type="gene ID" value="TraesJUL7B03G04109780"/>
</dbReference>
<dbReference type="EnsemblPlants" id="TraesKAR7B01G0056950.1">
    <property type="protein sequence ID" value="cds.TraesKAR7B01G0056950.1"/>
    <property type="gene ID" value="TraesKAR7B01G0056950"/>
</dbReference>
<dbReference type="EnsemblPlants" id="TraesLAC7B03G04024000.1">
    <property type="protein sequence ID" value="TraesLAC7B03G04024000.1.CDS1"/>
    <property type="gene ID" value="TraesLAC7B03G04024000"/>
</dbReference>
<dbReference type="EnsemblPlants" id="TraesLDM7B03G04075300.1">
    <property type="protein sequence ID" value="TraesLDM7B03G04075300.1.CDS1"/>
    <property type="gene ID" value="TraesLDM7B03G04075300"/>
</dbReference>
<dbReference type="EnsemblPlants" id="TraesMAC7B03G04066890.1">
    <property type="protein sequence ID" value="TraesMAC7B03G04066890.1.CDS1"/>
    <property type="gene ID" value="TraesMAC7B03G04066890"/>
</dbReference>
<dbReference type="EnsemblPlants" id="TraesNOR7B03G04116940.1">
    <property type="protein sequence ID" value="TraesNOR7B03G04116940.1.CDS1"/>
    <property type="gene ID" value="TraesNOR7B03G04116940"/>
</dbReference>
<dbReference type="EnsemblPlants" id="TraesPARA_EIv1.0_2384830.1">
    <property type="protein sequence ID" value="TraesPARA_EIv1.0_2384830.1.CDS1"/>
    <property type="gene ID" value="TraesPARA_EIv1.0_2384830"/>
</dbReference>
<dbReference type="EnsemblPlants" id="TraesRN7B0100185700.1">
    <property type="protein sequence ID" value="TraesRN7B0100185700.1"/>
    <property type="gene ID" value="TraesRN7B0100185700"/>
</dbReference>
<dbReference type="EnsemblPlants" id="TraesROB_scaffold_078932_01G000200.1">
    <property type="protein sequence ID" value="TraesROB_scaffold_078932_01G000200.1"/>
    <property type="gene ID" value="TraesROB_scaffold_078932_01G000200"/>
</dbReference>
<dbReference type="EnsemblPlants" id="TraesSTA7B03G04067360.1">
    <property type="protein sequence ID" value="TraesSTA7B03G04067360.1.CDS1"/>
    <property type="gene ID" value="TraesSTA7B03G04067360"/>
</dbReference>
<dbReference type="EnsemblPlants" id="TraesSYM5B03G02930560.1">
    <property type="protein sequence ID" value="TraesSYM5B03G02930560.1.CDS1"/>
    <property type="gene ID" value="TraesSYM5B03G02930560"/>
</dbReference>
<dbReference type="EnsemblPlants" id="TraesWEE_scaffold_119267_01G000200.1">
    <property type="protein sequence ID" value="TraesWEE_scaffold_119267_01G000200.1"/>
    <property type="gene ID" value="TraesWEE_scaffold_119267_01G000200"/>
</dbReference>
<dbReference type="GeneID" id="100682400"/>
<dbReference type="Gramene" id="TraesARI5B03G02944030.1">
    <property type="protein sequence ID" value="TraesARI5B03G02944030.1.CDS1"/>
    <property type="gene ID" value="TraesARI5B03G02944030"/>
</dbReference>
<dbReference type="Gramene" id="TraesCAD_scaffold_028654_01G000200.1">
    <property type="protein sequence ID" value="TraesCAD_scaffold_028654_01G000200.1"/>
    <property type="gene ID" value="TraesCAD_scaffold_028654_01G000200"/>
</dbReference>
<dbReference type="Gramene" id="TraesCLE_scaffold_075039_01G000200.1">
    <property type="protein sequence ID" value="TraesCLE_scaffold_075039_01G000200.1"/>
    <property type="gene ID" value="TraesCLE_scaffold_075039_01G000200"/>
</dbReference>
<dbReference type="Gramene" id="TraesCS7B02G072000.1">
    <property type="protein sequence ID" value="TraesCS7B02G072000.1.cds1"/>
    <property type="gene ID" value="TraesCS7B02G072000"/>
</dbReference>
<dbReference type="Gramene" id="TraesCS7B03G0195800.1">
    <property type="protein sequence ID" value="TraesCS7B03G0195800.1.CDS1"/>
    <property type="gene ID" value="TraesCS7B03G0195800"/>
</dbReference>
<dbReference type="Gramene" id="TraesJAG7B03G04054560.1">
    <property type="protein sequence ID" value="TraesJAG7B03G04054560.1.CDS1"/>
    <property type="gene ID" value="TraesJAG7B03G04054560"/>
</dbReference>
<dbReference type="Gramene" id="TraesJUL7B03G04109780.1">
    <property type="protein sequence ID" value="TraesJUL7B03G04109780.1.CDS1"/>
    <property type="gene ID" value="TraesJUL7B03G04109780"/>
</dbReference>
<dbReference type="Gramene" id="TraesKAR7B01G0056950.1">
    <property type="protein sequence ID" value="cds.TraesKAR7B01G0056950.1"/>
    <property type="gene ID" value="TraesKAR7B01G0056950"/>
</dbReference>
<dbReference type="Gramene" id="TraesLAC7B03G04024000.1">
    <property type="protein sequence ID" value="TraesLAC7B03G04024000.1.CDS1"/>
    <property type="gene ID" value="TraesLAC7B03G04024000"/>
</dbReference>
<dbReference type="Gramene" id="TraesLDM7B03G04075300.1">
    <property type="protein sequence ID" value="TraesLDM7B03G04075300.1.CDS1"/>
    <property type="gene ID" value="TraesLDM7B03G04075300"/>
</dbReference>
<dbReference type="Gramene" id="TraesMAC7B03G04066890.1">
    <property type="protein sequence ID" value="TraesMAC7B03G04066890.1.CDS1"/>
    <property type="gene ID" value="TraesMAC7B03G04066890"/>
</dbReference>
<dbReference type="Gramene" id="TraesNOR7B03G04116940.1">
    <property type="protein sequence ID" value="TraesNOR7B03G04116940.1.CDS1"/>
    <property type="gene ID" value="TraesNOR7B03G04116940"/>
</dbReference>
<dbReference type="Gramene" id="TraesPARA_EIv1.0_2384830.1">
    <property type="protein sequence ID" value="TraesPARA_EIv1.0_2384830.1.CDS1"/>
    <property type="gene ID" value="TraesPARA_EIv1.0_2384830"/>
</dbReference>
<dbReference type="Gramene" id="TraesRN7B0100185700.1">
    <property type="protein sequence ID" value="TraesRN7B0100185700.1"/>
    <property type="gene ID" value="TraesRN7B0100185700"/>
</dbReference>
<dbReference type="Gramene" id="TraesROB_scaffold_078932_01G000200.1">
    <property type="protein sequence ID" value="TraesROB_scaffold_078932_01G000200.1"/>
    <property type="gene ID" value="TraesROB_scaffold_078932_01G000200"/>
</dbReference>
<dbReference type="Gramene" id="TraesSTA7B03G04067360.1">
    <property type="protein sequence ID" value="TraesSTA7B03G04067360.1.CDS1"/>
    <property type="gene ID" value="TraesSTA7B03G04067360"/>
</dbReference>
<dbReference type="Gramene" id="TraesSYM5B03G02930560.1">
    <property type="protein sequence ID" value="TraesSYM5B03G02930560.1.CDS1"/>
    <property type="gene ID" value="TraesSYM5B03G02930560"/>
</dbReference>
<dbReference type="Gramene" id="TraesWEE_scaffold_119267_01G000200.1">
    <property type="protein sequence ID" value="TraesWEE_scaffold_119267_01G000200.1"/>
    <property type="gene ID" value="TraesWEE_scaffold_119267_01G000200"/>
</dbReference>
<dbReference type="OrthoDB" id="664799at2759"/>
<dbReference type="Proteomes" id="UP000019116">
    <property type="component" value="Chromosome 7B"/>
</dbReference>
<dbReference type="ExpressionAtlas" id="P16851">
    <property type="expression patterns" value="baseline and differential"/>
</dbReference>
<dbReference type="GO" id="GO:0005576">
    <property type="term" value="C:extracellular region"/>
    <property type="evidence" value="ECO:0007669"/>
    <property type="project" value="UniProtKB-SubCell"/>
</dbReference>
<dbReference type="GO" id="GO:0015066">
    <property type="term" value="F:alpha-amylase inhibitor activity"/>
    <property type="evidence" value="ECO:0007669"/>
    <property type="project" value="UniProtKB-KW"/>
</dbReference>
<dbReference type="GO" id="GO:0004867">
    <property type="term" value="F:serine-type endopeptidase inhibitor activity"/>
    <property type="evidence" value="ECO:0007669"/>
    <property type="project" value="UniProtKB-KW"/>
</dbReference>
<dbReference type="CDD" id="cd00261">
    <property type="entry name" value="AAI_SS"/>
    <property type="match status" value="1"/>
</dbReference>
<dbReference type="Gene3D" id="1.10.110.10">
    <property type="entry name" value="Plant lipid-transfer and hydrophobic proteins"/>
    <property type="match status" value="1"/>
</dbReference>
<dbReference type="InterPro" id="IPR006106">
    <property type="entry name" value="Allergen/soft/tryp_amyl_inhib"/>
</dbReference>
<dbReference type="InterPro" id="IPR006105">
    <property type="entry name" value="Allergen/tryp_amyl_inhib_CS"/>
</dbReference>
<dbReference type="InterPro" id="IPR036312">
    <property type="entry name" value="Bifun_inhib/LTP/seed_sf"/>
</dbReference>
<dbReference type="InterPro" id="IPR016140">
    <property type="entry name" value="Bifunc_inhib/LTP/seed_store"/>
</dbReference>
<dbReference type="PANTHER" id="PTHR34481:SF12">
    <property type="entry name" value="ALPHA-AMYLASE_TRYPSIN INHIBITOR CM2"/>
    <property type="match status" value="1"/>
</dbReference>
<dbReference type="PANTHER" id="PTHR34481">
    <property type="entry name" value="TRYPSIN/FACTOR XIIA INHIBITOR-RELATED"/>
    <property type="match status" value="1"/>
</dbReference>
<dbReference type="Pfam" id="PF00234">
    <property type="entry name" value="Tryp_alpha_amyl"/>
    <property type="match status" value="1"/>
</dbReference>
<dbReference type="PRINTS" id="PR00808">
    <property type="entry name" value="AMLASEINHBTR"/>
</dbReference>
<dbReference type="SMART" id="SM00499">
    <property type="entry name" value="AAI"/>
    <property type="match status" value="1"/>
</dbReference>
<dbReference type="SUPFAM" id="SSF47699">
    <property type="entry name" value="Bifunctional inhibitor/lipid-transfer protein/seed storage 2S albumin"/>
    <property type="match status" value="1"/>
</dbReference>
<dbReference type="PROSITE" id="PS00426">
    <property type="entry name" value="CEREAL_TRYP_AMYL_INH"/>
    <property type="match status" value="1"/>
</dbReference>
<sequence length="145" mass="15460">MASKSSITHLLLAAVLVSVFAAAAATGPYCYPGMGLPSNPLEGCREYVAQQTCGVGIVGSPVSTEPGNTPRDRCCKELYDASQHCRCEAVRYFIGRTSDPNSGVLKDLPGCPREPQRDFAKVLVTPGHCNVMTVHNTPYCLGLDI</sequence>
<reference key="1">
    <citation type="journal article" date="1991" name="Plant Mol. Biol.">
        <title>Nucleotide sequence of a cDNA clone encoding the wheat (Triticum durum Desf.) CM2 protein.</title>
        <authorList>
            <person name="Gautier M.-F."/>
            <person name="Alary R."/>
            <person name="Lullien V."/>
            <person name="Joudrier P."/>
        </authorList>
    </citation>
    <scope>NUCLEOTIDE SEQUENCE [MRNA]</scope>
    <source>
        <strain>cv. Agathe</strain>
        <tissue>Seed</tissue>
    </source>
</reference>
<reference key="2">
    <citation type="journal article" date="1986" name="Biochim. Biophys. Acta">
        <title>Evolutionary implications of sequential homologies among members of the trypsin / alpha-amylase inhibitor family (CM-proteins) in wheat and barley.</title>
        <authorList>
            <person name="Barber D."/>
            <person name="Sanchez-Monge R."/>
            <person name="Garcia-Olmedo F."/>
            <person name="Salcedo G."/>
            <person name="Mendez E."/>
        </authorList>
    </citation>
    <scope>PROTEIN SEQUENCE OF 26-53</scope>
</reference>
<organism>
    <name type="scientific">Triticum aestivum</name>
    <name type="common">Wheat</name>
    <dbReference type="NCBI Taxonomy" id="4565"/>
    <lineage>
        <taxon>Eukaryota</taxon>
        <taxon>Viridiplantae</taxon>
        <taxon>Streptophyta</taxon>
        <taxon>Embryophyta</taxon>
        <taxon>Tracheophyta</taxon>
        <taxon>Spermatophyta</taxon>
        <taxon>Magnoliopsida</taxon>
        <taxon>Liliopsida</taxon>
        <taxon>Poales</taxon>
        <taxon>Poaceae</taxon>
        <taxon>BOP clade</taxon>
        <taxon>Pooideae</taxon>
        <taxon>Triticodae</taxon>
        <taxon>Triticeae</taxon>
        <taxon>Triticinae</taxon>
        <taxon>Triticum</taxon>
    </lineage>
</organism>
<name>IAAC2_WHEAT</name>
<comment type="function">
    <text>Alpha-amylase/trypsin inhibitor. It could be involved in insect defense mechanisms.</text>
</comment>
<comment type="subcellular location">
    <subcellularLocation>
        <location>Secreted</location>
    </subcellularLocation>
</comment>
<comment type="tissue specificity">
    <text>Developing endosperm.</text>
</comment>
<comment type="miscellaneous">
    <text>CM proteins would be involved in the cooking quality of pasta.</text>
</comment>
<comment type="similarity">
    <text evidence="2">Belongs to the protease inhibitor I6 (cereal trypsin/alpha-amylase inhibitor) family.</text>
</comment>
<evidence type="ECO:0000269" key="1">
    <source ref="2"/>
</evidence>
<evidence type="ECO:0000305" key="2"/>
<keyword id="KW-0022">Alpha-amylase inhibitor</keyword>
<keyword id="KW-0903">Direct protein sequencing</keyword>
<keyword id="KW-0646">Protease inhibitor</keyword>
<keyword id="KW-1185">Reference proteome</keyword>
<keyword id="KW-0964">Secreted</keyword>
<keyword id="KW-0722">Serine protease inhibitor</keyword>
<keyword id="KW-0732">Signal</keyword>
<protein>
    <recommendedName>
        <fullName>Alpha-amylase/trypsin inhibitor CM2</fullName>
    </recommendedName>
    <alternativeName>
        <fullName>Chloroform/methanol-soluble protein CM2</fullName>
    </alternativeName>
</protein>
<feature type="signal peptide" evidence="1">
    <location>
        <begin position="1"/>
        <end position="25"/>
    </location>
</feature>
<feature type="chain" id="PRO_0000014345" description="Alpha-amylase/trypsin inhibitor CM2">
    <location>
        <begin position="26"/>
        <end position="145"/>
    </location>
</feature>
<accession>P16851</accession>
<proteinExistence type="evidence at protein level"/>